<gene>
    <name evidence="1" type="primary">sufS</name>
    <name type="ordered locus">YPTS_2384</name>
</gene>
<comment type="function">
    <text evidence="1">Cysteine desulfurases mobilize the sulfur from L-cysteine to yield L-alanine, an essential step in sulfur metabolism for biosynthesis of a variety of sulfur-containing biomolecules. Component of the suf operon, which is activated and required under specific conditions such as oxidative stress and iron limitation. Acts as a potent selenocysteine lyase in vitro, that mobilizes selenium from L-selenocysteine. Selenocysteine lyase activity is however unsure in vivo.</text>
</comment>
<comment type="catalytic activity">
    <reaction evidence="1">
        <text>(sulfur carrier)-H + L-cysteine = (sulfur carrier)-SH + L-alanine</text>
        <dbReference type="Rhea" id="RHEA:43892"/>
        <dbReference type="Rhea" id="RHEA-COMP:14737"/>
        <dbReference type="Rhea" id="RHEA-COMP:14739"/>
        <dbReference type="ChEBI" id="CHEBI:29917"/>
        <dbReference type="ChEBI" id="CHEBI:35235"/>
        <dbReference type="ChEBI" id="CHEBI:57972"/>
        <dbReference type="ChEBI" id="CHEBI:64428"/>
        <dbReference type="EC" id="2.8.1.7"/>
    </reaction>
</comment>
<comment type="catalytic activity">
    <reaction evidence="1">
        <text>L-selenocysteine + AH2 = hydrogenselenide + L-alanine + A + H(+)</text>
        <dbReference type="Rhea" id="RHEA:11632"/>
        <dbReference type="ChEBI" id="CHEBI:13193"/>
        <dbReference type="ChEBI" id="CHEBI:15378"/>
        <dbReference type="ChEBI" id="CHEBI:17499"/>
        <dbReference type="ChEBI" id="CHEBI:29317"/>
        <dbReference type="ChEBI" id="CHEBI:57843"/>
        <dbReference type="ChEBI" id="CHEBI:57972"/>
        <dbReference type="EC" id="4.4.1.16"/>
    </reaction>
</comment>
<comment type="cofactor">
    <cofactor evidence="1">
        <name>pyridoxal 5'-phosphate</name>
        <dbReference type="ChEBI" id="CHEBI:597326"/>
    </cofactor>
</comment>
<comment type="pathway">
    <text evidence="1">Cofactor biosynthesis; iron-sulfur cluster biosynthesis.</text>
</comment>
<comment type="subunit">
    <text evidence="1">Homodimer. Interacts with SufE and the SufBCD complex composed of SufB, SufC and SufD. The interaction with SufE is required to mediate the direct transfer of the sulfur atom from the S-sulfanylcysteine.</text>
</comment>
<comment type="subcellular location">
    <subcellularLocation>
        <location evidence="1">Cytoplasm</location>
    </subcellularLocation>
</comment>
<comment type="similarity">
    <text evidence="1">Belongs to the class-V pyridoxal-phosphate-dependent aminotransferase family. Csd subfamily.</text>
</comment>
<keyword id="KW-0963">Cytoplasm</keyword>
<keyword id="KW-0456">Lyase</keyword>
<keyword id="KW-0663">Pyridoxal phosphate</keyword>
<keyword id="KW-0808">Transferase</keyword>
<protein>
    <recommendedName>
        <fullName evidence="1">Cysteine desulfurase</fullName>
        <ecNumber evidence="1">2.8.1.7</ecNumber>
    </recommendedName>
    <alternativeName>
        <fullName evidence="1">Selenocysteine beta-lyase</fullName>
        <shortName evidence="1">SCL</shortName>
    </alternativeName>
    <alternativeName>
        <fullName evidence="1">Selenocysteine lyase</fullName>
        <ecNumber evidence="1">4.4.1.16</ecNumber>
    </alternativeName>
    <alternativeName>
        <fullName evidence="1">Selenocysteine reductase</fullName>
    </alternativeName>
</protein>
<sequence>MNFPIERVRADFPLLSRQVNGQPLVYLDSAASAQKPQAVIDKELHFYRDGYAAVHRGIHSLSAEATQQMEAVRTQVADFIHAASAEEIIFVRGTTEAINLVANSYGRHFLAAGDSIIITEMEHHANIVPWQMLAQDLGVEIRVWPLTATGELKITALAALIDDTTRLLAVTQVSNVLGTVNPIKDIVAQAKAAGLVVLVDGAQAVMHQPVDVQALGCDFYVFSGHKLYGPSGIGILYGKSALLQQMPPWEGGGAMIKTVSLTQGTTFADAPWRFEAGSPNTAGIMGLGAAIDYVTELGLLPIQQYEQSLMHYALAQLSQIKSLTLYGPTERAGVIAFNLGQHHAYDVGSFLDQYGIAIRTGHHCAMPLMAFYQVPSMCRASLALYNTREDVDRLVAGLQRIEKLLG</sequence>
<accession>B2K5J4</accession>
<feature type="chain" id="PRO_1000188313" description="Cysteine desulfurase">
    <location>
        <begin position="1"/>
        <end position="406"/>
    </location>
</feature>
<feature type="active site" description="Cysteine persulfide intermediate" evidence="1">
    <location>
        <position position="364"/>
    </location>
</feature>
<feature type="modified residue" description="N6-(pyridoxal phosphate)lysine" evidence="1">
    <location>
        <position position="226"/>
    </location>
</feature>
<evidence type="ECO:0000255" key="1">
    <source>
        <dbReference type="HAMAP-Rule" id="MF_01831"/>
    </source>
</evidence>
<dbReference type="EC" id="2.8.1.7" evidence="1"/>
<dbReference type="EC" id="4.4.1.16" evidence="1"/>
<dbReference type="EMBL" id="CP001048">
    <property type="protein sequence ID" value="ACC89345.1"/>
    <property type="molecule type" value="Genomic_DNA"/>
</dbReference>
<dbReference type="RefSeq" id="WP_011192533.1">
    <property type="nucleotide sequence ID" value="NZ_CP009780.1"/>
</dbReference>
<dbReference type="SMR" id="B2K5J4"/>
<dbReference type="GeneID" id="49785687"/>
<dbReference type="KEGG" id="ypb:YPTS_2384"/>
<dbReference type="PATRIC" id="fig|502801.10.peg.1789"/>
<dbReference type="UniPathway" id="UPA00266"/>
<dbReference type="GO" id="GO:0005737">
    <property type="term" value="C:cytoplasm"/>
    <property type="evidence" value="ECO:0007669"/>
    <property type="project" value="UniProtKB-SubCell"/>
</dbReference>
<dbReference type="GO" id="GO:0031071">
    <property type="term" value="F:cysteine desulfurase activity"/>
    <property type="evidence" value="ECO:0007669"/>
    <property type="project" value="UniProtKB-UniRule"/>
</dbReference>
<dbReference type="GO" id="GO:0030170">
    <property type="term" value="F:pyridoxal phosphate binding"/>
    <property type="evidence" value="ECO:0007669"/>
    <property type="project" value="InterPro"/>
</dbReference>
<dbReference type="GO" id="GO:0009000">
    <property type="term" value="F:selenocysteine lyase activity"/>
    <property type="evidence" value="ECO:0007669"/>
    <property type="project" value="UniProtKB-UniRule"/>
</dbReference>
<dbReference type="GO" id="GO:0006534">
    <property type="term" value="P:cysteine metabolic process"/>
    <property type="evidence" value="ECO:0007669"/>
    <property type="project" value="InterPro"/>
</dbReference>
<dbReference type="CDD" id="cd06453">
    <property type="entry name" value="SufS_like"/>
    <property type="match status" value="1"/>
</dbReference>
<dbReference type="Gene3D" id="3.90.1150.10">
    <property type="entry name" value="Aspartate Aminotransferase, domain 1"/>
    <property type="match status" value="1"/>
</dbReference>
<dbReference type="Gene3D" id="3.40.640.10">
    <property type="entry name" value="Type I PLP-dependent aspartate aminotransferase-like (Major domain)"/>
    <property type="match status" value="1"/>
</dbReference>
<dbReference type="HAMAP" id="MF_01831">
    <property type="entry name" value="SufS_aminotrans_5"/>
    <property type="match status" value="1"/>
</dbReference>
<dbReference type="InterPro" id="IPR000192">
    <property type="entry name" value="Aminotrans_V_dom"/>
</dbReference>
<dbReference type="InterPro" id="IPR020578">
    <property type="entry name" value="Aminotrans_V_PyrdxlP_BS"/>
</dbReference>
<dbReference type="InterPro" id="IPR010970">
    <property type="entry name" value="Cys_dSase_SufS"/>
</dbReference>
<dbReference type="InterPro" id="IPR015424">
    <property type="entry name" value="PyrdxlP-dep_Trfase"/>
</dbReference>
<dbReference type="InterPro" id="IPR015421">
    <property type="entry name" value="PyrdxlP-dep_Trfase_major"/>
</dbReference>
<dbReference type="InterPro" id="IPR015422">
    <property type="entry name" value="PyrdxlP-dep_Trfase_small"/>
</dbReference>
<dbReference type="NCBIfam" id="NF006791">
    <property type="entry name" value="PRK09295.1"/>
    <property type="match status" value="1"/>
</dbReference>
<dbReference type="NCBIfam" id="TIGR01979">
    <property type="entry name" value="sufS"/>
    <property type="match status" value="1"/>
</dbReference>
<dbReference type="PANTHER" id="PTHR43586">
    <property type="entry name" value="CYSTEINE DESULFURASE"/>
    <property type="match status" value="1"/>
</dbReference>
<dbReference type="PANTHER" id="PTHR43586:SF25">
    <property type="entry name" value="CYSTEINE DESULFURASE"/>
    <property type="match status" value="1"/>
</dbReference>
<dbReference type="Pfam" id="PF00266">
    <property type="entry name" value="Aminotran_5"/>
    <property type="match status" value="1"/>
</dbReference>
<dbReference type="SUPFAM" id="SSF53383">
    <property type="entry name" value="PLP-dependent transferases"/>
    <property type="match status" value="1"/>
</dbReference>
<dbReference type="PROSITE" id="PS00595">
    <property type="entry name" value="AA_TRANSFER_CLASS_5"/>
    <property type="match status" value="1"/>
</dbReference>
<proteinExistence type="inferred from homology"/>
<reference key="1">
    <citation type="submission" date="2008-04" db="EMBL/GenBank/DDBJ databases">
        <title>Complete sequence of Yersinia pseudotuberculosis PB1/+.</title>
        <authorList>
            <person name="Copeland A."/>
            <person name="Lucas S."/>
            <person name="Lapidus A."/>
            <person name="Glavina del Rio T."/>
            <person name="Dalin E."/>
            <person name="Tice H."/>
            <person name="Bruce D."/>
            <person name="Goodwin L."/>
            <person name="Pitluck S."/>
            <person name="Munk A.C."/>
            <person name="Brettin T."/>
            <person name="Detter J.C."/>
            <person name="Han C."/>
            <person name="Tapia R."/>
            <person name="Schmutz J."/>
            <person name="Larimer F."/>
            <person name="Land M."/>
            <person name="Hauser L."/>
            <person name="Challacombe J.F."/>
            <person name="Green L."/>
            <person name="Lindler L.E."/>
            <person name="Nikolich M.P."/>
            <person name="Richardson P."/>
        </authorList>
    </citation>
    <scope>NUCLEOTIDE SEQUENCE [LARGE SCALE GENOMIC DNA]</scope>
    <source>
        <strain>PB1/+</strain>
    </source>
</reference>
<organism>
    <name type="scientific">Yersinia pseudotuberculosis serotype IB (strain PB1/+)</name>
    <dbReference type="NCBI Taxonomy" id="502801"/>
    <lineage>
        <taxon>Bacteria</taxon>
        <taxon>Pseudomonadati</taxon>
        <taxon>Pseudomonadota</taxon>
        <taxon>Gammaproteobacteria</taxon>
        <taxon>Enterobacterales</taxon>
        <taxon>Yersiniaceae</taxon>
        <taxon>Yersinia</taxon>
    </lineage>
</organism>
<name>SUFS_YERPB</name>